<organism>
    <name type="scientific">Pseudomonas syringae pv. tomato (strain ATCC BAA-871 / DC3000)</name>
    <dbReference type="NCBI Taxonomy" id="223283"/>
    <lineage>
        <taxon>Bacteria</taxon>
        <taxon>Pseudomonadati</taxon>
        <taxon>Pseudomonadota</taxon>
        <taxon>Gammaproteobacteria</taxon>
        <taxon>Pseudomonadales</taxon>
        <taxon>Pseudomonadaceae</taxon>
        <taxon>Pseudomonas</taxon>
    </lineage>
</organism>
<dbReference type="EC" id="6.1.1.10" evidence="1"/>
<dbReference type="EMBL" id="AE016853">
    <property type="protein sequence ID" value="AAO57603.1"/>
    <property type="molecule type" value="Genomic_DNA"/>
</dbReference>
<dbReference type="RefSeq" id="NP_793908.1">
    <property type="nucleotide sequence ID" value="NC_004578.1"/>
</dbReference>
<dbReference type="RefSeq" id="WP_005764864.1">
    <property type="nucleotide sequence ID" value="NC_004578.1"/>
</dbReference>
<dbReference type="SMR" id="Q87XN0"/>
<dbReference type="STRING" id="223283.PSPTO_4147"/>
<dbReference type="GeneID" id="1185827"/>
<dbReference type="KEGG" id="pst:PSPTO_4147"/>
<dbReference type="PATRIC" id="fig|223283.9.peg.4257"/>
<dbReference type="eggNOG" id="COG0073">
    <property type="taxonomic scope" value="Bacteria"/>
</dbReference>
<dbReference type="eggNOG" id="COG0143">
    <property type="taxonomic scope" value="Bacteria"/>
</dbReference>
<dbReference type="HOGENOM" id="CLU_009710_7_0_6"/>
<dbReference type="OrthoDB" id="9810191at2"/>
<dbReference type="PhylomeDB" id="Q87XN0"/>
<dbReference type="Proteomes" id="UP000002515">
    <property type="component" value="Chromosome"/>
</dbReference>
<dbReference type="GO" id="GO:0005829">
    <property type="term" value="C:cytosol"/>
    <property type="evidence" value="ECO:0007669"/>
    <property type="project" value="TreeGrafter"/>
</dbReference>
<dbReference type="GO" id="GO:0005524">
    <property type="term" value="F:ATP binding"/>
    <property type="evidence" value="ECO:0007669"/>
    <property type="project" value="UniProtKB-UniRule"/>
</dbReference>
<dbReference type="GO" id="GO:0046872">
    <property type="term" value="F:metal ion binding"/>
    <property type="evidence" value="ECO:0007669"/>
    <property type="project" value="UniProtKB-KW"/>
</dbReference>
<dbReference type="GO" id="GO:0004825">
    <property type="term" value="F:methionine-tRNA ligase activity"/>
    <property type="evidence" value="ECO:0007669"/>
    <property type="project" value="UniProtKB-UniRule"/>
</dbReference>
<dbReference type="GO" id="GO:0000049">
    <property type="term" value="F:tRNA binding"/>
    <property type="evidence" value="ECO:0007669"/>
    <property type="project" value="UniProtKB-KW"/>
</dbReference>
<dbReference type="GO" id="GO:0006431">
    <property type="term" value="P:methionyl-tRNA aminoacylation"/>
    <property type="evidence" value="ECO:0007669"/>
    <property type="project" value="UniProtKB-UniRule"/>
</dbReference>
<dbReference type="CDD" id="cd07957">
    <property type="entry name" value="Anticodon_Ia_Met"/>
    <property type="match status" value="1"/>
</dbReference>
<dbReference type="CDD" id="cd00814">
    <property type="entry name" value="MetRS_core"/>
    <property type="match status" value="1"/>
</dbReference>
<dbReference type="CDD" id="cd02800">
    <property type="entry name" value="tRNA_bind_EcMetRS_like"/>
    <property type="match status" value="1"/>
</dbReference>
<dbReference type="FunFam" id="1.10.730.10:FF:000005">
    <property type="entry name" value="Methionine--tRNA ligase"/>
    <property type="match status" value="1"/>
</dbReference>
<dbReference type="FunFam" id="2.20.28.20:FF:000001">
    <property type="entry name" value="Methionine--tRNA ligase"/>
    <property type="match status" value="1"/>
</dbReference>
<dbReference type="FunFam" id="2.40.50.140:FF:000042">
    <property type="entry name" value="Methionine--tRNA ligase"/>
    <property type="match status" value="1"/>
</dbReference>
<dbReference type="Gene3D" id="3.40.50.620">
    <property type="entry name" value="HUPs"/>
    <property type="match status" value="1"/>
</dbReference>
<dbReference type="Gene3D" id="1.10.730.10">
    <property type="entry name" value="Isoleucyl-tRNA Synthetase, Domain 1"/>
    <property type="match status" value="1"/>
</dbReference>
<dbReference type="Gene3D" id="2.20.28.20">
    <property type="entry name" value="Methionyl-tRNA synthetase, Zn-domain"/>
    <property type="match status" value="1"/>
</dbReference>
<dbReference type="Gene3D" id="2.40.50.140">
    <property type="entry name" value="Nucleic acid-binding proteins"/>
    <property type="match status" value="1"/>
</dbReference>
<dbReference type="HAMAP" id="MF_00098">
    <property type="entry name" value="Met_tRNA_synth_type1"/>
    <property type="match status" value="1"/>
</dbReference>
<dbReference type="InterPro" id="IPR001412">
    <property type="entry name" value="aa-tRNA-synth_I_CS"/>
</dbReference>
<dbReference type="InterPro" id="IPR041872">
    <property type="entry name" value="Anticodon_Met"/>
</dbReference>
<dbReference type="InterPro" id="IPR004495">
    <property type="entry name" value="Met-tRNA-synth_bsu_C"/>
</dbReference>
<dbReference type="InterPro" id="IPR023458">
    <property type="entry name" value="Met-tRNA_ligase_1"/>
</dbReference>
<dbReference type="InterPro" id="IPR014758">
    <property type="entry name" value="Met-tRNA_synth"/>
</dbReference>
<dbReference type="InterPro" id="IPR015413">
    <property type="entry name" value="Methionyl/Leucyl_tRNA_Synth"/>
</dbReference>
<dbReference type="InterPro" id="IPR033911">
    <property type="entry name" value="MetRS_core"/>
</dbReference>
<dbReference type="InterPro" id="IPR029038">
    <property type="entry name" value="MetRS_Zn"/>
</dbReference>
<dbReference type="InterPro" id="IPR012340">
    <property type="entry name" value="NA-bd_OB-fold"/>
</dbReference>
<dbReference type="InterPro" id="IPR014729">
    <property type="entry name" value="Rossmann-like_a/b/a_fold"/>
</dbReference>
<dbReference type="InterPro" id="IPR002547">
    <property type="entry name" value="tRNA-bd_dom"/>
</dbReference>
<dbReference type="InterPro" id="IPR009080">
    <property type="entry name" value="tRNAsynth_Ia_anticodon-bd"/>
</dbReference>
<dbReference type="NCBIfam" id="TIGR00398">
    <property type="entry name" value="metG"/>
    <property type="match status" value="1"/>
</dbReference>
<dbReference type="NCBIfam" id="TIGR00399">
    <property type="entry name" value="metG_C_term"/>
    <property type="match status" value="1"/>
</dbReference>
<dbReference type="NCBIfam" id="NF001100">
    <property type="entry name" value="PRK00133.1"/>
    <property type="match status" value="1"/>
</dbReference>
<dbReference type="PANTHER" id="PTHR45765">
    <property type="entry name" value="METHIONINE--TRNA LIGASE"/>
    <property type="match status" value="1"/>
</dbReference>
<dbReference type="PANTHER" id="PTHR45765:SF1">
    <property type="entry name" value="METHIONINE--TRNA LIGASE, CYTOPLASMIC"/>
    <property type="match status" value="1"/>
</dbReference>
<dbReference type="Pfam" id="PF19303">
    <property type="entry name" value="Anticodon_3"/>
    <property type="match status" value="1"/>
</dbReference>
<dbReference type="Pfam" id="PF09334">
    <property type="entry name" value="tRNA-synt_1g"/>
    <property type="match status" value="1"/>
</dbReference>
<dbReference type="Pfam" id="PF01588">
    <property type="entry name" value="tRNA_bind"/>
    <property type="match status" value="1"/>
</dbReference>
<dbReference type="PRINTS" id="PR01041">
    <property type="entry name" value="TRNASYNTHMET"/>
</dbReference>
<dbReference type="SUPFAM" id="SSF47323">
    <property type="entry name" value="Anticodon-binding domain of a subclass of class I aminoacyl-tRNA synthetases"/>
    <property type="match status" value="1"/>
</dbReference>
<dbReference type="SUPFAM" id="SSF57770">
    <property type="entry name" value="Methionyl-tRNA synthetase (MetRS), Zn-domain"/>
    <property type="match status" value="1"/>
</dbReference>
<dbReference type="SUPFAM" id="SSF50249">
    <property type="entry name" value="Nucleic acid-binding proteins"/>
    <property type="match status" value="1"/>
</dbReference>
<dbReference type="SUPFAM" id="SSF52374">
    <property type="entry name" value="Nucleotidylyl transferase"/>
    <property type="match status" value="1"/>
</dbReference>
<dbReference type="PROSITE" id="PS00178">
    <property type="entry name" value="AA_TRNA_LIGASE_I"/>
    <property type="match status" value="1"/>
</dbReference>
<dbReference type="PROSITE" id="PS50886">
    <property type="entry name" value="TRBD"/>
    <property type="match status" value="1"/>
</dbReference>
<sequence>MSEPRKILVTSALPYANGPVHLGHMLEYIQTDMWVRFQKHRGNQCIYVCADDAHGSAIMLRAEKEGITPEQLIDNVKAEHSADFADFLVDFDNFHSTHSDENRELSSMIYTRLRDAGHIATRSVTQYFDPEKKMFLADRFIKGTCPKCAAVDQYGDNCEKCGATYAPTDLKDPKSAISGATPVLKDSKHFFFDLPAFDTMLKSWTRSGTLQDAVANKIAEWLDSGLQQWDISRDAPYFGFEIPDEPGKYFYVWLDAPIGYMASFKNLCARRPDLDFDAYWGKDATTELYHFIGKDIVNFHALFWPAMLEGADLRKPTGVNVHGYLTVNGQKMSKSRGTFIKARTYLDHLPPEYLRYYYASKLGRGVDDLDLNLEDFVQKVNSDLIGKVVNIASRCAGFIHKGNAGVMVDANAAPELTDAFLAAAPSIADAYEARDFARAMRETMALADRANAYIAEKAPWALAKQEGKQDEVQAVCALGVNLFRQLVIFLKPVLPNLAADAEKFLNVAPLTWDDHKTLLTHHQLNPFSALMTRIDPLKVEAMAAASKEDLTATDTSTDAAPAGNGELAKDPLSAEIDFDAFAAVDLRVALILKAEHVEGADKLLRLTLDIGDEQRNVFSGIKSAYPDPSKLEGRLTMMIANLKPRKMRFGISEGMVMAAGPGGEEIYLLSPDSGAKPGQRIK</sequence>
<feature type="chain" id="PRO_0000139156" description="Methionine--tRNA ligase">
    <location>
        <begin position="1"/>
        <end position="682"/>
    </location>
</feature>
<feature type="domain" description="tRNA-binding" evidence="1">
    <location>
        <begin position="580"/>
        <end position="682"/>
    </location>
</feature>
<feature type="short sequence motif" description="'HIGH' region">
    <location>
        <begin position="14"/>
        <end position="24"/>
    </location>
</feature>
<feature type="short sequence motif" description="'KMSKS' region">
    <location>
        <begin position="331"/>
        <end position="335"/>
    </location>
</feature>
<feature type="binding site" evidence="1">
    <location>
        <position position="145"/>
    </location>
    <ligand>
        <name>Zn(2+)</name>
        <dbReference type="ChEBI" id="CHEBI:29105"/>
    </ligand>
</feature>
<feature type="binding site" evidence="1">
    <location>
        <position position="148"/>
    </location>
    <ligand>
        <name>Zn(2+)</name>
        <dbReference type="ChEBI" id="CHEBI:29105"/>
    </ligand>
</feature>
<feature type="binding site" evidence="1">
    <location>
        <position position="158"/>
    </location>
    <ligand>
        <name>Zn(2+)</name>
        <dbReference type="ChEBI" id="CHEBI:29105"/>
    </ligand>
</feature>
<feature type="binding site" evidence="1">
    <location>
        <position position="161"/>
    </location>
    <ligand>
        <name>Zn(2+)</name>
        <dbReference type="ChEBI" id="CHEBI:29105"/>
    </ligand>
</feature>
<feature type="binding site" evidence="1">
    <location>
        <position position="334"/>
    </location>
    <ligand>
        <name>ATP</name>
        <dbReference type="ChEBI" id="CHEBI:30616"/>
    </ligand>
</feature>
<evidence type="ECO:0000255" key="1">
    <source>
        <dbReference type="HAMAP-Rule" id="MF_00098"/>
    </source>
</evidence>
<keyword id="KW-0030">Aminoacyl-tRNA synthetase</keyword>
<keyword id="KW-0067">ATP-binding</keyword>
<keyword id="KW-0963">Cytoplasm</keyword>
<keyword id="KW-0436">Ligase</keyword>
<keyword id="KW-0479">Metal-binding</keyword>
<keyword id="KW-0547">Nucleotide-binding</keyword>
<keyword id="KW-0648">Protein biosynthesis</keyword>
<keyword id="KW-1185">Reference proteome</keyword>
<keyword id="KW-0694">RNA-binding</keyword>
<keyword id="KW-0820">tRNA-binding</keyword>
<keyword id="KW-0862">Zinc</keyword>
<accession>Q87XN0</accession>
<protein>
    <recommendedName>
        <fullName evidence="1">Methionine--tRNA ligase</fullName>
        <ecNumber evidence="1">6.1.1.10</ecNumber>
    </recommendedName>
    <alternativeName>
        <fullName evidence="1">Methionyl-tRNA synthetase</fullName>
        <shortName evidence="1">MetRS</shortName>
    </alternativeName>
</protein>
<gene>
    <name evidence="1" type="primary">metG</name>
    <name type="ordered locus">PSPTO_4147</name>
</gene>
<name>SYM_PSESM</name>
<reference key="1">
    <citation type="journal article" date="2003" name="Proc. Natl. Acad. Sci. U.S.A.">
        <title>The complete genome sequence of the Arabidopsis and tomato pathogen Pseudomonas syringae pv. tomato DC3000.</title>
        <authorList>
            <person name="Buell C.R."/>
            <person name="Joardar V."/>
            <person name="Lindeberg M."/>
            <person name="Selengut J."/>
            <person name="Paulsen I.T."/>
            <person name="Gwinn M.L."/>
            <person name="Dodson R.J."/>
            <person name="DeBoy R.T."/>
            <person name="Durkin A.S."/>
            <person name="Kolonay J.F."/>
            <person name="Madupu R."/>
            <person name="Daugherty S.C."/>
            <person name="Brinkac L.M."/>
            <person name="Beanan M.J."/>
            <person name="Haft D.H."/>
            <person name="Nelson W.C."/>
            <person name="Davidsen T.M."/>
            <person name="Zafar N."/>
            <person name="Zhou L."/>
            <person name="Liu J."/>
            <person name="Yuan Q."/>
            <person name="Khouri H.M."/>
            <person name="Fedorova N.B."/>
            <person name="Tran B."/>
            <person name="Russell D."/>
            <person name="Berry K.J."/>
            <person name="Utterback T.R."/>
            <person name="Van Aken S.E."/>
            <person name="Feldblyum T.V."/>
            <person name="D'Ascenzo M."/>
            <person name="Deng W.-L."/>
            <person name="Ramos A.R."/>
            <person name="Alfano J.R."/>
            <person name="Cartinhour S."/>
            <person name="Chatterjee A.K."/>
            <person name="Delaney T.P."/>
            <person name="Lazarowitz S.G."/>
            <person name="Martin G.B."/>
            <person name="Schneider D.J."/>
            <person name="Tang X."/>
            <person name="Bender C.L."/>
            <person name="White O."/>
            <person name="Fraser C.M."/>
            <person name="Collmer A."/>
        </authorList>
    </citation>
    <scope>NUCLEOTIDE SEQUENCE [LARGE SCALE GENOMIC DNA]</scope>
    <source>
        <strain>ATCC BAA-871 / DC3000</strain>
    </source>
</reference>
<comment type="function">
    <text evidence="1">Is required not only for elongation of protein synthesis but also for the initiation of all mRNA translation through initiator tRNA(fMet) aminoacylation.</text>
</comment>
<comment type="catalytic activity">
    <reaction evidence="1">
        <text>tRNA(Met) + L-methionine + ATP = L-methionyl-tRNA(Met) + AMP + diphosphate</text>
        <dbReference type="Rhea" id="RHEA:13481"/>
        <dbReference type="Rhea" id="RHEA-COMP:9667"/>
        <dbReference type="Rhea" id="RHEA-COMP:9698"/>
        <dbReference type="ChEBI" id="CHEBI:30616"/>
        <dbReference type="ChEBI" id="CHEBI:33019"/>
        <dbReference type="ChEBI" id="CHEBI:57844"/>
        <dbReference type="ChEBI" id="CHEBI:78442"/>
        <dbReference type="ChEBI" id="CHEBI:78530"/>
        <dbReference type="ChEBI" id="CHEBI:456215"/>
        <dbReference type="EC" id="6.1.1.10"/>
    </reaction>
</comment>
<comment type="cofactor">
    <cofactor evidence="1">
        <name>Zn(2+)</name>
        <dbReference type="ChEBI" id="CHEBI:29105"/>
    </cofactor>
    <text evidence="1">Binds 1 zinc ion per subunit.</text>
</comment>
<comment type="subunit">
    <text evidence="1">Homodimer.</text>
</comment>
<comment type="subcellular location">
    <subcellularLocation>
        <location evidence="1">Cytoplasm</location>
    </subcellularLocation>
</comment>
<comment type="similarity">
    <text evidence="1">Belongs to the class-I aminoacyl-tRNA synthetase family. MetG type 1 subfamily.</text>
</comment>
<proteinExistence type="inferred from homology"/>